<gene>
    <name type="primary">Enpep</name>
</gene>
<dbReference type="EC" id="3.4.11.7"/>
<dbReference type="EMBL" id="M29961">
    <property type="protein sequence ID" value="AAB47732.1"/>
    <property type="molecule type" value="mRNA"/>
</dbReference>
<dbReference type="CCDS" id="CCDS17831.1"/>
<dbReference type="PIR" id="S30398">
    <property type="entry name" value="S30398"/>
</dbReference>
<dbReference type="RefSeq" id="NP_031960.1">
    <property type="nucleotide sequence ID" value="NM_007934.3"/>
</dbReference>
<dbReference type="SMR" id="P16406"/>
<dbReference type="FunCoup" id="P16406">
    <property type="interactions" value="92"/>
</dbReference>
<dbReference type="STRING" id="10090.ENSMUSP00000029658"/>
<dbReference type="GuidetoPHARMACOLOGY" id="1568"/>
<dbReference type="MEROPS" id="M01.003"/>
<dbReference type="GlyCosmos" id="P16406">
    <property type="glycosylation" value="9 sites, 4 glycans"/>
</dbReference>
<dbReference type="GlyGen" id="P16406">
    <property type="glycosylation" value="10 sites, 4 N-linked glycans (4 sites), 1 O-linked glycan (1 site)"/>
</dbReference>
<dbReference type="iPTMnet" id="P16406"/>
<dbReference type="PhosphoSitePlus" id="P16406"/>
<dbReference type="SwissPalm" id="P16406"/>
<dbReference type="jPOST" id="P16406"/>
<dbReference type="PaxDb" id="10090-ENSMUSP00000029658"/>
<dbReference type="PeptideAtlas" id="P16406"/>
<dbReference type="ProteomicsDB" id="296283"/>
<dbReference type="Antibodypedia" id="979">
    <property type="antibodies" value="538 antibodies from 36 providers"/>
</dbReference>
<dbReference type="DNASU" id="13809"/>
<dbReference type="Ensembl" id="ENSMUST00000029658.14">
    <property type="protein sequence ID" value="ENSMUSP00000029658.8"/>
    <property type="gene ID" value="ENSMUSG00000028024.15"/>
</dbReference>
<dbReference type="GeneID" id="13809"/>
<dbReference type="KEGG" id="mmu:13809"/>
<dbReference type="UCSC" id="uc008rhy.1">
    <property type="organism name" value="mouse"/>
</dbReference>
<dbReference type="AGR" id="MGI:106645"/>
<dbReference type="CTD" id="2028"/>
<dbReference type="MGI" id="MGI:106645">
    <property type="gene designation" value="Enpep"/>
</dbReference>
<dbReference type="VEuPathDB" id="HostDB:ENSMUSG00000028024"/>
<dbReference type="eggNOG" id="KOG1046">
    <property type="taxonomic scope" value="Eukaryota"/>
</dbReference>
<dbReference type="GeneTree" id="ENSGT00940000156946"/>
<dbReference type="HOGENOM" id="CLU_003705_0_1_1"/>
<dbReference type="InParanoid" id="P16406"/>
<dbReference type="OMA" id="WNVWSQF"/>
<dbReference type="OrthoDB" id="510539at2759"/>
<dbReference type="PhylomeDB" id="P16406"/>
<dbReference type="TreeFam" id="TF300395"/>
<dbReference type="BRENDA" id="3.4.11.7">
    <property type="organism ID" value="3474"/>
</dbReference>
<dbReference type="Reactome" id="R-MMU-2022377">
    <property type="pathway name" value="Metabolism of Angiotensinogen to Angiotensins"/>
</dbReference>
<dbReference type="BioGRID-ORCS" id="13809">
    <property type="hits" value="4 hits in 78 CRISPR screens"/>
</dbReference>
<dbReference type="ChiTaRS" id="Enpep">
    <property type="organism name" value="mouse"/>
</dbReference>
<dbReference type="PRO" id="PR:P16406"/>
<dbReference type="Proteomes" id="UP000000589">
    <property type="component" value="Chromosome 3"/>
</dbReference>
<dbReference type="RNAct" id="P16406">
    <property type="molecule type" value="protein"/>
</dbReference>
<dbReference type="Bgee" id="ENSMUSG00000028024">
    <property type="expression patterns" value="Expressed in small intestine Peyer's patch and 210 other cell types or tissues"/>
</dbReference>
<dbReference type="ExpressionAtlas" id="P16406">
    <property type="expression patterns" value="baseline and differential"/>
</dbReference>
<dbReference type="GO" id="GO:0045177">
    <property type="term" value="C:apical part of cell"/>
    <property type="evidence" value="ECO:0000314"/>
    <property type="project" value="MGI"/>
</dbReference>
<dbReference type="GO" id="GO:0016324">
    <property type="term" value="C:apical plasma membrane"/>
    <property type="evidence" value="ECO:0000314"/>
    <property type="project" value="MGI"/>
</dbReference>
<dbReference type="GO" id="GO:0005903">
    <property type="term" value="C:brush border"/>
    <property type="evidence" value="ECO:0000314"/>
    <property type="project" value="MGI"/>
</dbReference>
<dbReference type="GO" id="GO:0031410">
    <property type="term" value="C:cytoplasmic vesicle"/>
    <property type="evidence" value="ECO:0000314"/>
    <property type="project" value="MGI"/>
</dbReference>
<dbReference type="GO" id="GO:0009897">
    <property type="term" value="C:external side of plasma membrane"/>
    <property type="evidence" value="ECO:0000314"/>
    <property type="project" value="MGI"/>
</dbReference>
<dbReference type="GO" id="GO:0005886">
    <property type="term" value="C:plasma membrane"/>
    <property type="evidence" value="ECO:0000250"/>
    <property type="project" value="UniProtKB"/>
</dbReference>
<dbReference type="GO" id="GO:0004177">
    <property type="term" value="F:aminopeptidase activity"/>
    <property type="evidence" value="ECO:0000250"/>
    <property type="project" value="UniProtKB"/>
</dbReference>
<dbReference type="GO" id="GO:0004230">
    <property type="term" value="F:glutamyl aminopeptidase activity"/>
    <property type="evidence" value="ECO:0007669"/>
    <property type="project" value="UniProtKB-EC"/>
</dbReference>
<dbReference type="GO" id="GO:0070006">
    <property type="term" value="F:metalloaminopeptidase activity"/>
    <property type="evidence" value="ECO:0000250"/>
    <property type="project" value="UniProtKB"/>
</dbReference>
<dbReference type="GO" id="GO:0008237">
    <property type="term" value="F:metallopeptidase activity"/>
    <property type="evidence" value="ECO:0000314"/>
    <property type="project" value="MGI"/>
</dbReference>
<dbReference type="GO" id="GO:0008233">
    <property type="term" value="F:peptidase activity"/>
    <property type="evidence" value="ECO:0000314"/>
    <property type="project" value="MGI"/>
</dbReference>
<dbReference type="GO" id="GO:0008270">
    <property type="term" value="F:zinc ion binding"/>
    <property type="evidence" value="ECO:0007669"/>
    <property type="project" value="InterPro"/>
</dbReference>
<dbReference type="GO" id="GO:0001525">
    <property type="term" value="P:angiogenesis"/>
    <property type="evidence" value="ECO:0000315"/>
    <property type="project" value="MGI"/>
</dbReference>
<dbReference type="GO" id="GO:0002003">
    <property type="term" value="P:angiotensin maturation"/>
    <property type="evidence" value="ECO:0000314"/>
    <property type="project" value="MGI"/>
</dbReference>
<dbReference type="GO" id="GO:0016477">
    <property type="term" value="P:cell migration"/>
    <property type="evidence" value="ECO:0000250"/>
    <property type="project" value="UniProtKB"/>
</dbReference>
<dbReference type="GO" id="GO:0008283">
    <property type="term" value="P:cell population proliferation"/>
    <property type="evidence" value="ECO:0000250"/>
    <property type="project" value="UniProtKB"/>
</dbReference>
<dbReference type="GO" id="GO:0032835">
    <property type="term" value="P:glomerulus development"/>
    <property type="evidence" value="ECO:0000270"/>
    <property type="project" value="UniProtKB"/>
</dbReference>
<dbReference type="GO" id="GO:0003081">
    <property type="term" value="P:regulation of systemic arterial blood pressure by renin-angiotensin"/>
    <property type="evidence" value="ECO:0000250"/>
    <property type="project" value="UniProtKB"/>
</dbReference>
<dbReference type="GO" id="GO:0101023">
    <property type="term" value="P:vascular endothelial cell proliferation"/>
    <property type="evidence" value="ECO:0000266"/>
    <property type="project" value="MGI"/>
</dbReference>
<dbReference type="CDD" id="cd09601">
    <property type="entry name" value="M1_APN-Q_like"/>
    <property type="match status" value="1"/>
</dbReference>
<dbReference type="FunFam" id="1.25.50.20:FF:000001">
    <property type="entry name" value="Aminopeptidase"/>
    <property type="match status" value="1"/>
</dbReference>
<dbReference type="FunFam" id="2.60.40.1730:FF:000006">
    <property type="entry name" value="Aminopeptidase"/>
    <property type="match status" value="1"/>
</dbReference>
<dbReference type="FunFam" id="2.60.40.1910:FF:000003">
    <property type="entry name" value="Aminopeptidase"/>
    <property type="match status" value="1"/>
</dbReference>
<dbReference type="FunFam" id="1.10.390.10:FF:000016">
    <property type="entry name" value="Glutamyl aminopeptidase"/>
    <property type="match status" value="1"/>
</dbReference>
<dbReference type="Gene3D" id="1.25.50.20">
    <property type="match status" value="1"/>
</dbReference>
<dbReference type="Gene3D" id="2.60.40.1910">
    <property type="match status" value="1"/>
</dbReference>
<dbReference type="Gene3D" id="1.10.390.10">
    <property type="entry name" value="Neutral Protease Domain 2"/>
    <property type="match status" value="1"/>
</dbReference>
<dbReference type="Gene3D" id="2.60.40.1730">
    <property type="entry name" value="tricorn interacting facor f3 domain"/>
    <property type="match status" value="1"/>
</dbReference>
<dbReference type="InterPro" id="IPR045357">
    <property type="entry name" value="Aminopeptidase_N-like_N"/>
</dbReference>
<dbReference type="InterPro" id="IPR042097">
    <property type="entry name" value="Aminopeptidase_N-like_N_sf"/>
</dbReference>
<dbReference type="InterPro" id="IPR024571">
    <property type="entry name" value="ERAP1-like_C_dom"/>
</dbReference>
<dbReference type="InterPro" id="IPR034016">
    <property type="entry name" value="M1_APN-typ"/>
</dbReference>
<dbReference type="InterPro" id="IPR001930">
    <property type="entry name" value="Peptidase_M1"/>
</dbReference>
<dbReference type="InterPro" id="IPR050344">
    <property type="entry name" value="Peptidase_M1_aminopeptidases"/>
</dbReference>
<dbReference type="InterPro" id="IPR014782">
    <property type="entry name" value="Peptidase_M1_dom"/>
</dbReference>
<dbReference type="InterPro" id="IPR027268">
    <property type="entry name" value="Peptidase_M4/M1_CTD_sf"/>
</dbReference>
<dbReference type="PANTHER" id="PTHR11533:SF276">
    <property type="entry name" value="GLUTAMYL AMINOPEPTIDASE"/>
    <property type="match status" value="1"/>
</dbReference>
<dbReference type="PANTHER" id="PTHR11533">
    <property type="entry name" value="PROTEASE M1 ZINC METALLOPROTEASE"/>
    <property type="match status" value="1"/>
</dbReference>
<dbReference type="Pfam" id="PF11838">
    <property type="entry name" value="ERAP1_C"/>
    <property type="match status" value="1"/>
</dbReference>
<dbReference type="Pfam" id="PF01433">
    <property type="entry name" value="Peptidase_M1"/>
    <property type="match status" value="1"/>
</dbReference>
<dbReference type="Pfam" id="PF17900">
    <property type="entry name" value="Peptidase_M1_N"/>
    <property type="match status" value="1"/>
</dbReference>
<dbReference type="PRINTS" id="PR00756">
    <property type="entry name" value="ALADIPTASE"/>
</dbReference>
<dbReference type="SUPFAM" id="SSF63737">
    <property type="entry name" value="Leukotriene A4 hydrolase N-terminal domain"/>
    <property type="match status" value="1"/>
</dbReference>
<dbReference type="SUPFAM" id="SSF55486">
    <property type="entry name" value="Metalloproteases ('zincins'), catalytic domain"/>
    <property type="match status" value="1"/>
</dbReference>
<dbReference type="PROSITE" id="PS00142">
    <property type="entry name" value="ZINC_PROTEASE"/>
    <property type="match status" value="1"/>
</dbReference>
<comment type="function">
    <text evidence="1">Regulates central hypertension through its calcium-modulated preference to cleave N-terminal acidic residues from peptides such as angiotensin II.</text>
</comment>
<comment type="catalytic activity">
    <reaction evidence="1">
        <text>Release of N-terminal glutamate (and to a lesser extent aspartate) from a peptide.</text>
        <dbReference type="EC" id="3.4.11.7"/>
    </reaction>
</comment>
<comment type="cofactor">
    <cofactor evidence="1">
        <name>Zn(2+)</name>
        <dbReference type="ChEBI" id="CHEBI:29105"/>
    </cofactor>
    <text evidence="1">Binds 1 zinc ion per subunit.</text>
</comment>
<comment type="activity regulation">
    <text evidence="1">Substrate specificity is modulated by calcium which enhances the enzymatic activity for cleavage of acidic residues while reducing its activity with basic residues. Inhibited by aminopeptidase inhibitors amastatin and bestatin.</text>
</comment>
<comment type="subunit">
    <text evidence="1">Homodimer; disulfide-linked.</text>
</comment>
<comment type="subcellular location">
    <subcellularLocation>
        <location evidence="1">Cell membrane</location>
        <topology>Single-pass type II membrane protein</topology>
    </subcellularLocation>
</comment>
<comment type="tissue specificity">
    <text evidence="5">Early B-lineage cells and certain stromal cell of hemopoietic tissues. Also expressed by capillary endothelial cells, placenta, and epithelial cells of the intestine and proximal renal tubules.</text>
</comment>
<comment type="similarity">
    <text evidence="6">Belongs to the peptidase M1 family.</text>
</comment>
<reference key="1">
    <citation type="journal article" date="1990" name="Proc. Natl. Acad. Sci. U.S.A.">
        <title>Molecular cloning of the murine BP-1/6C3 antigen: a member of the zinc-dependent metallopeptidase family.</title>
        <authorList>
            <person name="Wu Q."/>
            <person name="Lahti J.M."/>
            <person name="Air G.M."/>
            <person name="Burrows P.D."/>
            <person name="Cooper M.D."/>
        </authorList>
    </citation>
    <scope>NUCLEOTIDE SEQUENCE [MRNA]</scope>
    <scope>PROTEIN SEQUENCE OF 77-96; 98-102; 624-632; 709-720 AND 930-939</scope>
    <scope>TISSUE SPECIFICITY</scope>
</reference>
<reference key="2">
    <citation type="journal article" date="2010" name="Cell">
        <title>A tissue-specific atlas of mouse protein phosphorylation and expression.</title>
        <authorList>
            <person name="Huttlin E.L."/>
            <person name="Jedrychowski M.P."/>
            <person name="Elias J.E."/>
            <person name="Goswami T."/>
            <person name="Rad R."/>
            <person name="Beausoleil S.A."/>
            <person name="Villen J."/>
            <person name="Haas W."/>
            <person name="Sowa M.E."/>
            <person name="Gygi S.P."/>
        </authorList>
    </citation>
    <scope>IDENTIFICATION BY MASS SPECTROMETRY [LARGE SCALE ANALYSIS]</scope>
    <source>
        <tissue>Brown adipose tissue</tissue>
        <tissue>Heart</tissue>
        <tissue>Kidney</tissue>
        <tissue>Liver</tissue>
        <tissue>Lung</tissue>
        <tissue>Pancreas</tissue>
    </source>
</reference>
<sequence>MNFAEEEPSKKYCIKGKHVAIICGVVVAVGLIVGLSVGLTRSCEQDTTPAPSQPPPEASTALPPQDQNVCPDSEDESGEWKNFRLPDFINPVHYDLEVKALMEEDRYTGIVTISVNLSKPTRDLWLHIRETKITKLPELRRPSGEQVPIRRCFEYKKQEYVVIQAAEDLAATSGDSVYRLTMEFKGWLNGSLVGFYKTTYMEDGQIRSIAATDHEPTDARKSFPCFDEPNKKSTYSISIIHPKEYSALSNMPEEKSEMVDDNWKKTTFVKSVPMSTYLVCFAVHRFTAIERKSRSGKPLKVYVQPNQKETAEYAANITQAVFDYFEDYFAMEYALPKLDKIAIPDFGTGAMENWGLVTYRETNLLYDPLLSASSNQQRVASVVAHELVHQWFGNTVTMDWWDDLWLNEGFASFFEFLGVNHAEKDWQMLSQVLLEDVFPVQEDDSLMSSHPVVVTVSTPAEITSVFDGISYSKGASILRMLQDWITPEKFQKGCQIYLKKFQFANAKTSDFWDSLQEASNLPVKEVMDTWTSQMGYPVVTVSGRQNITQKRFLLDSKADPSQPPSELGYTWNIPVRWADNDNSRITVYNRLDKGGITLNANLSGDAFLKINPDHIGFYRVNYEGGTWDWIAEALSSNHTRFSAADRSSFIDDAFALARAQLLNYKIALNLTMYLKSEEDFLPWERVISSVSYIISMFEDDRELYPMIETYFQGQVKPVADLLGWQDTGSHITKLLRASILGFACKMGDREALGNASQLFDSWLKGSASIPVNLRLLVYRYGMQNSGNEAAWNYTLEQYQKTSLAQEKEKLLYGLASVKDVKLLARYLEMLKDPNIIKTQDVFTVIRYISYNSYGKTMAWNWIQLNWDYLVSRFTINDRYLGRIVTIAEPFNTELQLWQMQSFFAKYPNAGAGAKPREQVLETVKNNIEWLNVNRQSIREWFASLP</sequence>
<organism>
    <name type="scientific">Mus musculus</name>
    <name type="common">Mouse</name>
    <dbReference type="NCBI Taxonomy" id="10090"/>
    <lineage>
        <taxon>Eukaryota</taxon>
        <taxon>Metazoa</taxon>
        <taxon>Chordata</taxon>
        <taxon>Craniata</taxon>
        <taxon>Vertebrata</taxon>
        <taxon>Euteleostomi</taxon>
        <taxon>Mammalia</taxon>
        <taxon>Eutheria</taxon>
        <taxon>Euarchontoglires</taxon>
        <taxon>Glires</taxon>
        <taxon>Rodentia</taxon>
        <taxon>Myomorpha</taxon>
        <taxon>Muroidea</taxon>
        <taxon>Muridae</taxon>
        <taxon>Murinae</taxon>
        <taxon>Mus</taxon>
        <taxon>Mus</taxon>
    </lineage>
</organism>
<keyword id="KW-0031">Aminopeptidase</keyword>
<keyword id="KW-0106">Calcium</keyword>
<keyword id="KW-1003">Cell membrane</keyword>
<keyword id="KW-0903">Direct protein sequencing</keyword>
<keyword id="KW-1015">Disulfide bond</keyword>
<keyword id="KW-0325">Glycoprotein</keyword>
<keyword id="KW-0378">Hydrolase</keyword>
<keyword id="KW-0472">Membrane</keyword>
<keyword id="KW-0479">Metal-binding</keyword>
<keyword id="KW-0482">Metalloprotease</keyword>
<keyword id="KW-0645">Protease</keyword>
<keyword id="KW-1185">Reference proteome</keyword>
<keyword id="KW-0735">Signal-anchor</keyword>
<keyword id="KW-0812">Transmembrane</keyword>
<keyword id="KW-1133">Transmembrane helix</keyword>
<keyword id="KW-0862">Zinc</keyword>
<accession>P16406</accession>
<proteinExistence type="evidence at protein level"/>
<feature type="chain" id="PRO_0000095096" description="Glutamyl aminopeptidase">
    <location>
        <begin position="1"/>
        <end position="945"/>
    </location>
</feature>
<feature type="topological domain" description="Cytoplasmic" evidence="2">
    <location>
        <begin position="1"/>
        <end position="18"/>
    </location>
</feature>
<feature type="transmembrane region" description="Helical; Signal-anchor for type II membrane protein" evidence="2">
    <location>
        <begin position="19"/>
        <end position="39"/>
    </location>
</feature>
<feature type="topological domain" description="Extracellular" evidence="2">
    <location>
        <begin position="40"/>
        <end position="945"/>
    </location>
</feature>
<feature type="region of interest" description="Disordered" evidence="4">
    <location>
        <begin position="43"/>
        <end position="77"/>
    </location>
</feature>
<feature type="active site" description="Proton acceptor" evidence="3">
    <location>
        <position position="386"/>
    </location>
</feature>
<feature type="binding site" evidence="1">
    <location>
        <position position="215"/>
    </location>
    <ligand>
        <name>substrate</name>
    </ligand>
</feature>
<feature type="binding site" evidence="1">
    <location>
        <begin position="349"/>
        <end position="353"/>
    </location>
    <ligand>
        <name>substrate</name>
    </ligand>
</feature>
<feature type="binding site" evidence="3">
    <location>
        <position position="385"/>
    </location>
    <ligand>
        <name>Zn(2+)</name>
        <dbReference type="ChEBI" id="CHEBI:29105"/>
        <note>catalytic</note>
    </ligand>
</feature>
<feature type="binding site" evidence="3">
    <location>
        <position position="389"/>
    </location>
    <ligand>
        <name>Zn(2+)</name>
        <dbReference type="ChEBI" id="CHEBI:29105"/>
        <note>catalytic</note>
    </ligand>
</feature>
<feature type="binding site" evidence="3">
    <location>
        <position position="408"/>
    </location>
    <ligand>
        <name>Zn(2+)</name>
        <dbReference type="ChEBI" id="CHEBI:29105"/>
        <note>catalytic</note>
    </ligand>
</feature>
<feature type="binding site" evidence="1">
    <location>
        <position position="878"/>
    </location>
    <ligand>
        <name>substrate</name>
    </ligand>
</feature>
<feature type="site" description="Binds calcium which modulates its enzyme activity" evidence="1">
    <location>
        <position position="213"/>
    </location>
</feature>
<feature type="site" description="Transition state stabilizer" evidence="1">
    <location>
        <position position="471"/>
    </location>
</feature>
<feature type="glycosylation site" description="N-linked (GlcNAc...) asparagine" evidence="2">
    <location>
        <position position="116"/>
    </location>
</feature>
<feature type="glycosylation site" description="N-linked (GlcNAc...) asparagine" evidence="2">
    <location>
        <position position="189"/>
    </location>
</feature>
<feature type="glycosylation site" description="N-linked (GlcNAc...) asparagine" evidence="2">
    <location>
        <position position="316"/>
    </location>
</feature>
<feature type="glycosylation site" description="N-linked (GlcNAc...) asparagine" evidence="2">
    <location>
        <position position="546"/>
    </location>
</feature>
<feature type="glycosylation site" description="N-linked (GlcNAc...) asparagine" evidence="2">
    <location>
        <position position="601"/>
    </location>
</feature>
<feature type="glycosylation site" description="N-linked (GlcNAc...) asparagine" evidence="2">
    <location>
        <position position="637"/>
    </location>
</feature>
<feature type="glycosylation site" description="N-linked (GlcNAc...) asparagine" evidence="2">
    <location>
        <position position="669"/>
    </location>
</feature>
<feature type="glycosylation site" description="N-linked (GlcNAc...) asparagine" evidence="2">
    <location>
        <position position="754"/>
    </location>
</feature>
<feature type="glycosylation site" description="N-linked (GlcNAc...) asparagine" evidence="2">
    <location>
        <position position="792"/>
    </location>
</feature>
<evidence type="ECO:0000250" key="1">
    <source>
        <dbReference type="UniProtKB" id="Q07075"/>
    </source>
</evidence>
<evidence type="ECO:0000255" key="2"/>
<evidence type="ECO:0000255" key="3">
    <source>
        <dbReference type="PROSITE-ProRule" id="PRU10095"/>
    </source>
</evidence>
<evidence type="ECO:0000256" key="4">
    <source>
        <dbReference type="SAM" id="MobiDB-lite"/>
    </source>
</evidence>
<evidence type="ECO:0000269" key="5">
    <source>
    </source>
</evidence>
<evidence type="ECO:0000305" key="6"/>
<name>AMPE_MOUSE</name>
<protein>
    <recommendedName>
        <fullName>Glutamyl aminopeptidase</fullName>
        <shortName>EAP</shortName>
        <ecNumber>3.4.11.7</ecNumber>
    </recommendedName>
    <alternativeName>
        <fullName>Aminopeptidase A</fullName>
        <shortName>AP-A</shortName>
    </alternativeName>
    <alternativeName>
        <fullName>BP-1/6C3 antigen</fullName>
    </alternativeName>
    <cdAntigenName>CD249</cdAntigenName>
</protein>